<reference key="1">
    <citation type="journal article" date="2001" name="Lancet">
        <title>Whole genome sequencing of meticillin-resistant Staphylococcus aureus.</title>
        <authorList>
            <person name="Kuroda M."/>
            <person name="Ohta T."/>
            <person name="Uchiyama I."/>
            <person name="Baba T."/>
            <person name="Yuzawa H."/>
            <person name="Kobayashi I."/>
            <person name="Cui L."/>
            <person name="Oguchi A."/>
            <person name="Aoki K."/>
            <person name="Nagai Y."/>
            <person name="Lian J.-Q."/>
            <person name="Ito T."/>
            <person name="Kanamori M."/>
            <person name="Matsumaru H."/>
            <person name="Maruyama A."/>
            <person name="Murakami H."/>
            <person name="Hosoyama A."/>
            <person name="Mizutani-Ui Y."/>
            <person name="Takahashi N.K."/>
            <person name="Sawano T."/>
            <person name="Inoue R."/>
            <person name="Kaito C."/>
            <person name="Sekimizu K."/>
            <person name="Hirakawa H."/>
            <person name="Kuhara S."/>
            <person name="Goto S."/>
            <person name="Yabuzaki J."/>
            <person name="Kanehisa M."/>
            <person name="Yamashita A."/>
            <person name="Oshima K."/>
            <person name="Furuya K."/>
            <person name="Yoshino C."/>
            <person name="Shiba T."/>
            <person name="Hattori M."/>
            <person name="Ogasawara N."/>
            <person name="Hayashi H."/>
            <person name="Hiramatsu K."/>
        </authorList>
    </citation>
    <scope>NUCLEOTIDE SEQUENCE [LARGE SCALE GENOMIC DNA]</scope>
    <source>
        <strain>N315</strain>
    </source>
</reference>
<reference key="2">
    <citation type="submission" date="2007-10" db="UniProtKB">
        <title>Shotgun proteomic analysis of total and membrane protein extracts of S. aureus strain N315.</title>
        <authorList>
            <person name="Vaezzadeh A.R."/>
            <person name="Deshusses J."/>
            <person name="Lescuyer P."/>
            <person name="Hochstrasser D.F."/>
        </authorList>
    </citation>
    <scope>IDENTIFICATION BY MASS SPECTROMETRY [LARGE SCALE ANALYSIS]</scope>
    <source>
        <strain>N315</strain>
    </source>
</reference>
<accession>Q7A557</accession>
<dbReference type="EC" id="2.1.3.15" evidence="1"/>
<dbReference type="EMBL" id="BA000018">
    <property type="protein sequence ID" value="BAB42790.1"/>
    <property type="molecule type" value="Genomic_DNA"/>
</dbReference>
<dbReference type="RefSeq" id="WP_000471571.1">
    <property type="nucleotide sequence ID" value="NC_002745.2"/>
</dbReference>
<dbReference type="SMR" id="Q7A557"/>
<dbReference type="EnsemblBacteria" id="BAB42790">
    <property type="protein sequence ID" value="BAB42790"/>
    <property type="gene ID" value="BAB42790"/>
</dbReference>
<dbReference type="KEGG" id="sau:SA1523"/>
<dbReference type="HOGENOM" id="CLU_015486_1_0_9"/>
<dbReference type="UniPathway" id="UPA00655">
    <property type="reaction ID" value="UER00711"/>
</dbReference>
<dbReference type="GO" id="GO:0009317">
    <property type="term" value="C:acetyl-CoA carboxylase complex"/>
    <property type="evidence" value="ECO:0007669"/>
    <property type="project" value="InterPro"/>
</dbReference>
<dbReference type="GO" id="GO:0003989">
    <property type="term" value="F:acetyl-CoA carboxylase activity"/>
    <property type="evidence" value="ECO:0007669"/>
    <property type="project" value="InterPro"/>
</dbReference>
<dbReference type="GO" id="GO:0005524">
    <property type="term" value="F:ATP binding"/>
    <property type="evidence" value="ECO:0007669"/>
    <property type="project" value="UniProtKB-KW"/>
</dbReference>
<dbReference type="GO" id="GO:0016743">
    <property type="term" value="F:carboxyl- or carbamoyltransferase activity"/>
    <property type="evidence" value="ECO:0007669"/>
    <property type="project" value="UniProtKB-UniRule"/>
</dbReference>
<dbReference type="GO" id="GO:0008270">
    <property type="term" value="F:zinc ion binding"/>
    <property type="evidence" value="ECO:0007669"/>
    <property type="project" value="UniProtKB-UniRule"/>
</dbReference>
<dbReference type="GO" id="GO:0006633">
    <property type="term" value="P:fatty acid biosynthetic process"/>
    <property type="evidence" value="ECO:0007669"/>
    <property type="project" value="UniProtKB-KW"/>
</dbReference>
<dbReference type="GO" id="GO:2001295">
    <property type="term" value="P:malonyl-CoA biosynthetic process"/>
    <property type="evidence" value="ECO:0007669"/>
    <property type="project" value="UniProtKB-UniRule"/>
</dbReference>
<dbReference type="Gene3D" id="3.90.226.10">
    <property type="entry name" value="2-enoyl-CoA Hydratase, Chain A, domain 1"/>
    <property type="match status" value="1"/>
</dbReference>
<dbReference type="HAMAP" id="MF_01395">
    <property type="entry name" value="AcetylCoA_CT_beta"/>
    <property type="match status" value="1"/>
</dbReference>
<dbReference type="InterPro" id="IPR034733">
    <property type="entry name" value="AcCoA_carboxyl_beta"/>
</dbReference>
<dbReference type="InterPro" id="IPR000438">
    <property type="entry name" value="Acetyl_CoA_COase_Trfase_b_su"/>
</dbReference>
<dbReference type="InterPro" id="IPR029045">
    <property type="entry name" value="ClpP/crotonase-like_dom_sf"/>
</dbReference>
<dbReference type="InterPro" id="IPR011762">
    <property type="entry name" value="COA_CT_N"/>
</dbReference>
<dbReference type="InterPro" id="IPR041010">
    <property type="entry name" value="Znf-ACC"/>
</dbReference>
<dbReference type="NCBIfam" id="TIGR00515">
    <property type="entry name" value="accD"/>
    <property type="match status" value="1"/>
</dbReference>
<dbReference type="PANTHER" id="PTHR42995">
    <property type="entry name" value="ACETYL-COENZYME A CARBOXYLASE CARBOXYL TRANSFERASE SUBUNIT BETA, CHLOROPLASTIC"/>
    <property type="match status" value="1"/>
</dbReference>
<dbReference type="PANTHER" id="PTHR42995:SF5">
    <property type="entry name" value="ACETYL-COENZYME A CARBOXYLASE CARBOXYL TRANSFERASE SUBUNIT BETA, CHLOROPLASTIC"/>
    <property type="match status" value="1"/>
</dbReference>
<dbReference type="Pfam" id="PF01039">
    <property type="entry name" value="Carboxyl_trans"/>
    <property type="match status" value="1"/>
</dbReference>
<dbReference type="Pfam" id="PF17848">
    <property type="entry name" value="Zn_ribbon_ACC"/>
    <property type="match status" value="1"/>
</dbReference>
<dbReference type="PRINTS" id="PR01070">
    <property type="entry name" value="ACCCTRFRASEB"/>
</dbReference>
<dbReference type="SUPFAM" id="SSF52096">
    <property type="entry name" value="ClpP/crotonase"/>
    <property type="match status" value="1"/>
</dbReference>
<dbReference type="PROSITE" id="PS50980">
    <property type="entry name" value="COA_CT_NTER"/>
    <property type="match status" value="1"/>
</dbReference>
<gene>
    <name evidence="1" type="primary">accD</name>
    <name type="ordered locus">SA1523</name>
</gene>
<name>ACCD_STAAN</name>
<sequence>MFKDFFNRTKKKKYLTVQDSKNNDVPAGIMTKCPKCKKIMYTKELAENLNVCFNCDHHIALTAYKRIEAISDEGSFTEFDKGMTSANPLDFPSYLEKIEKDQQKTGLKEAVVTGTAQLDGMKFGVAVMDSRFRMGSMGSVIGEKICRIIDYCTENRLPFILFSASGGARMQEGIISLMQMGKTSVSLKRHSDAGLLYISYLTHPTTGGVSASFASVGDINLSEPKALIGFAGRRVIEQTINEKLPDDFQTAEFLLEHGQLDKVVHRNDMRQTLSEILKIHQEVTK</sequence>
<proteinExistence type="evidence at protein level"/>
<organism>
    <name type="scientific">Staphylococcus aureus (strain N315)</name>
    <dbReference type="NCBI Taxonomy" id="158879"/>
    <lineage>
        <taxon>Bacteria</taxon>
        <taxon>Bacillati</taxon>
        <taxon>Bacillota</taxon>
        <taxon>Bacilli</taxon>
        <taxon>Bacillales</taxon>
        <taxon>Staphylococcaceae</taxon>
        <taxon>Staphylococcus</taxon>
    </lineage>
</organism>
<feature type="chain" id="PRO_0000389856" description="Acetyl-coenzyme A carboxylase carboxyl transferase subunit beta">
    <location>
        <begin position="1"/>
        <end position="285"/>
    </location>
</feature>
<feature type="domain" description="CoA carboxyltransferase N-terminal" evidence="2">
    <location>
        <begin position="29"/>
        <end position="285"/>
    </location>
</feature>
<feature type="zinc finger region" description="C4-type" evidence="1">
    <location>
        <begin position="33"/>
        <end position="55"/>
    </location>
</feature>
<feature type="binding site" evidence="1">
    <location>
        <position position="33"/>
    </location>
    <ligand>
        <name>Zn(2+)</name>
        <dbReference type="ChEBI" id="CHEBI:29105"/>
    </ligand>
</feature>
<feature type="binding site" evidence="1">
    <location>
        <position position="36"/>
    </location>
    <ligand>
        <name>Zn(2+)</name>
        <dbReference type="ChEBI" id="CHEBI:29105"/>
    </ligand>
</feature>
<feature type="binding site" evidence="1">
    <location>
        <position position="52"/>
    </location>
    <ligand>
        <name>Zn(2+)</name>
        <dbReference type="ChEBI" id="CHEBI:29105"/>
    </ligand>
</feature>
<feature type="binding site" evidence="1">
    <location>
        <position position="55"/>
    </location>
    <ligand>
        <name>Zn(2+)</name>
        <dbReference type="ChEBI" id="CHEBI:29105"/>
    </ligand>
</feature>
<protein>
    <recommendedName>
        <fullName evidence="1">Acetyl-coenzyme A carboxylase carboxyl transferase subunit beta</fullName>
        <shortName evidence="1">ACCase subunit beta</shortName>
        <shortName evidence="1">Acetyl-CoA carboxylase carboxyltransferase subunit beta</shortName>
        <ecNumber evidence="1">2.1.3.15</ecNumber>
    </recommendedName>
</protein>
<evidence type="ECO:0000255" key="1">
    <source>
        <dbReference type="HAMAP-Rule" id="MF_01395"/>
    </source>
</evidence>
<evidence type="ECO:0000255" key="2">
    <source>
        <dbReference type="PROSITE-ProRule" id="PRU01136"/>
    </source>
</evidence>
<comment type="function">
    <text evidence="1">Component of the acetyl coenzyme A carboxylase (ACC) complex. Biotin carboxylase (BC) catalyzes the carboxylation of biotin on its carrier protein (BCCP) and then the CO(2) group is transferred by the transcarboxylase to acetyl-CoA to form malonyl-CoA.</text>
</comment>
<comment type="catalytic activity">
    <reaction evidence="1">
        <text>N(6)-carboxybiotinyl-L-lysyl-[protein] + acetyl-CoA = N(6)-biotinyl-L-lysyl-[protein] + malonyl-CoA</text>
        <dbReference type="Rhea" id="RHEA:54728"/>
        <dbReference type="Rhea" id="RHEA-COMP:10505"/>
        <dbReference type="Rhea" id="RHEA-COMP:10506"/>
        <dbReference type="ChEBI" id="CHEBI:57288"/>
        <dbReference type="ChEBI" id="CHEBI:57384"/>
        <dbReference type="ChEBI" id="CHEBI:83144"/>
        <dbReference type="ChEBI" id="CHEBI:83145"/>
        <dbReference type="EC" id="2.1.3.15"/>
    </reaction>
</comment>
<comment type="cofactor">
    <cofactor evidence="1">
        <name>Zn(2+)</name>
        <dbReference type="ChEBI" id="CHEBI:29105"/>
    </cofactor>
    <text evidence="1">Binds 1 zinc ion per subunit.</text>
</comment>
<comment type="pathway">
    <text evidence="1">Lipid metabolism; malonyl-CoA biosynthesis; malonyl-CoA from acetyl-CoA: step 1/1.</text>
</comment>
<comment type="subunit">
    <text evidence="1">Acetyl-CoA carboxylase is a heterohexamer composed of biotin carboxyl carrier protein (AccB), biotin carboxylase (AccC) and two subunits each of ACCase subunit alpha (AccA) and ACCase subunit beta (AccD).</text>
</comment>
<comment type="subcellular location">
    <subcellularLocation>
        <location evidence="1">Cytoplasm</location>
    </subcellularLocation>
</comment>
<comment type="similarity">
    <text evidence="1">Belongs to the AccD/PCCB family.</text>
</comment>
<keyword id="KW-0067">ATP-binding</keyword>
<keyword id="KW-0963">Cytoplasm</keyword>
<keyword id="KW-0275">Fatty acid biosynthesis</keyword>
<keyword id="KW-0276">Fatty acid metabolism</keyword>
<keyword id="KW-0444">Lipid biosynthesis</keyword>
<keyword id="KW-0443">Lipid metabolism</keyword>
<keyword id="KW-0479">Metal-binding</keyword>
<keyword id="KW-0547">Nucleotide-binding</keyword>
<keyword id="KW-0808">Transferase</keyword>
<keyword id="KW-0862">Zinc</keyword>
<keyword id="KW-0863">Zinc-finger</keyword>